<accession>B9MBD2</accession>
<proteinExistence type="inferred from homology"/>
<keyword id="KW-0030">Aminoacyl-tRNA synthetase</keyword>
<keyword id="KW-0067">ATP-binding</keyword>
<keyword id="KW-0963">Cytoplasm</keyword>
<keyword id="KW-0436">Ligase</keyword>
<keyword id="KW-0547">Nucleotide-binding</keyword>
<keyword id="KW-0648">Protein biosynthesis</keyword>
<keyword id="KW-1185">Reference proteome</keyword>
<gene>
    <name evidence="1" type="primary">argS</name>
    <name type="ordered locus">Dtpsy_0332</name>
</gene>
<dbReference type="EC" id="6.1.1.19" evidence="1"/>
<dbReference type="EMBL" id="CP001392">
    <property type="protein sequence ID" value="ACM31816.1"/>
    <property type="molecule type" value="Genomic_DNA"/>
</dbReference>
<dbReference type="RefSeq" id="WP_012655403.1">
    <property type="nucleotide sequence ID" value="NC_011992.1"/>
</dbReference>
<dbReference type="SMR" id="B9MBD2"/>
<dbReference type="KEGG" id="dia:Dtpsy_0332"/>
<dbReference type="eggNOG" id="COG0018">
    <property type="taxonomic scope" value="Bacteria"/>
</dbReference>
<dbReference type="HOGENOM" id="CLU_006406_0_1_4"/>
<dbReference type="Proteomes" id="UP000000450">
    <property type="component" value="Chromosome"/>
</dbReference>
<dbReference type="GO" id="GO:0005737">
    <property type="term" value="C:cytoplasm"/>
    <property type="evidence" value="ECO:0007669"/>
    <property type="project" value="UniProtKB-SubCell"/>
</dbReference>
<dbReference type="GO" id="GO:0004814">
    <property type="term" value="F:arginine-tRNA ligase activity"/>
    <property type="evidence" value="ECO:0007669"/>
    <property type="project" value="UniProtKB-UniRule"/>
</dbReference>
<dbReference type="GO" id="GO:0005524">
    <property type="term" value="F:ATP binding"/>
    <property type="evidence" value="ECO:0007669"/>
    <property type="project" value="UniProtKB-UniRule"/>
</dbReference>
<dbReference type="GO" id="GO:0006420">
    <property type="term" value="P:arginyl-tRNA aminoacylation"/>
    <property type="evidence" value="ECO:0007669"/>
    <property type="project" value="UniProtKB-UniRule"/>
</dbReference>
<dbReference type="CDD" id="cd07956">
    <property type="entry name" value="Anticodon_Ia_Arg"/>
    <property type="match status" value="1"/>
</dbReference>
<dbReference type="CDD" id="cd00671">
    <property type="entry name" value="ArgRS_core"/>
    <property type="match status" value="1"/>
</dbReference>
<dbReference type="FunFam" id="1.10.730.10:FF:000008">
    <property type="entry name" value="Arginine--tRNA ligase"/>
    <property type="match status" value="1"/>
</dbReference>
<dbReference type="FunFam" id="3.40.50.620:FF:000062">
    <property type="entry name" value="Arginine--tRNA ligase"/>
    <property type="match status" value="1"/>
</dbReference>
<dbReference type="Gene3D" id="3.30.1360.70">
    <property type="entry name" value="Arginyl tRNA synthetase N-terminal domain"/>
    <property type="match status" value="1"/>
</dbReference>
<dbReference type="Gene3D" id="3.40.50.620">
    <property type="entry name" value="HUPs"/>
    <property type="match status" value="1"/>
</dbReference>
<dbReference type="Gene3D" id="1.10.730.10">
    <property type="entry name" value="Isoleucyl-tRNA Synthetase, Domain 1"/>
    <property type="match status" value="1"/>
</dbReference>
<dbReference type="HAMAP" id="MF_00123">
    <property type="entry name" value="Arg_tRNA_synth"/>
    <property type="match status" value="1"/>
</dbReference>
<dbReference type="InterPro" id="IPR001412">
    <property type="entry name" value="aa-tRNA-synth_I_CS"/>
</dbReference>
<dbReference type="InterPro" id="IPR001278">
    <property type="entry name" value="Arg-tRNA-ligase"/>
</dbReference>
<dbReference type="InterPro" id="IPR005148">
    <property type="entry name" value="Arg-tRNA-synth_N"/>
</dbReference>
<dbReference type="InterPro" id="IPR036695">
    <property type="entry name" value="Arg-tRNA-synth_N_sf"/>
</dbReference>
<dbReference type="InterPro" id="IPR035684">
    <property type="entry name" value="ArgRS_core"/>
</dbReference>
<dbReference type="InterPro" id="IPR008909">
    <property type="entry name" value="DALR_anticod-bd"/>
</dbReference>
<dbReference type="InterPro" id="IPR014729">
    <property type="entry name" value="Rossmann-like_a/b/a_fold"/>
</dbReference>
<dbReference type="InterPro" id="IPR009080">
    <property type="entry name" value="tRNAsynth_Ia_anticodon-bd"/>
</dbReference>
<dbReference type="NCBIfam" id="TIGR00456">
    <property type="entry name" value="argS"/>
    <property type="match status" value="1"/>
</dbReference>
<dbReference type="PANTHER" id="PTHR11956:SF5">
    <property type="entry name" value="ARGININE--TRNA LIGASE, CYTOPLASMIC"/>
    <property type="match status" value="1"/>
</dbReference>
<dbReference type="PANTHER" id="PTHR11956">
    <property type="entry name" value="ARGINYL-TRNA SYNTHETASE"/>
    <property type="match status" value="1"/>
</dbReference>
<dbReference type="Pfam" id="PF03485">
    <property type="entry name" value="Arg_tRNA_synt_N"/>
    <property type="match status" value="1"/>
</dbReference>
<dbReference type="Pfam" id="PF05746">
    <property type="entry name" value="DALR_1"/>
    <property type="match status" value="1"/>
</dbReference>
<dbReference type="Pfam" id="PF00750">
    <property type="entry name" value="tRNA-synt_1d"/>
    <property type="match status" value="1"/>
</dbReference>
<dbReference type="PRINTS" id="PR01038">
    <property type="entry name" value="TRNASYNTHARG"/>
</dbReference>
<dbReference type="SMART" id="SM01016">
    <property type="entry name" value="Arg_tRNA_synt_N"/>
    <property type="match status" value="1"/>
</dbReference>
<dbReference type="SMART" id="SM00836">
    <property type="entry name" value="DALR_1"/>
    <property type="match status" value="1"/>
</dbReference>
<dbReference type="SUPFAM" id="SSF47323">
    <property type="entry name" value="Anticodon-binding domain of a subclass of class I aminoacyl-tRNA synthetases"/>
    <property type="match status" value="1"/>
</dbReference>
<dbReference type="SUPFAM" id="SSF55190">
    <property type="entry name" value="Arginyl-tRNA synthetase (ArgRS), N-terminal 'additional' domain"/>
    <property type="match status" value="1"/>
</dbReference>
<dbReference type="SUPFAM" id="SSF52374">
    <property type="entry name" value="Nucleotidylyl transferase"/>
    <property type="match status" value="1"/>
</dbReference>
<dbReference type="PROSITE" id="PS00178">
    <property type="entry name" value="AA_TRNA_LIGASE_I"/>
    <property type="match status" value="1"/>
</dbReference>
<evidence type="ECO:0000255" key="1">
    <source>
        <dbReference type="HAMAP-Rule" id="MF_00123"/>
    </source>
</evidence>
<organism>
    <name type="scientific">Acidovorax ebreus (strain TPSY)</name>
    <name type="common">Diaphorobacter sp. (strain TPSY)</name>
    <dbReference type="NCBI Taxonomy" id="535289"/>
    <lineage>
        <taxon>Bacteria</taxon>
        <taxon>Pseudomonadati</taxon>
        <taxon>Pseudomonadota</taxon>
        <taxon>Betaproteobacteria</taxon>
        <taxon>Burkholderiales</taxon>
        <taxon>Comamonadaceae</taxon>
        <taxon>Diaphorobacter</taxon>
    </lineage>
</organism>
<sequence length="567" mass="62703">MLSVKQELLAALADELEKVSPGAGSRAAFESPKVAAHGDLACTAAMQLAKPLKQNPRALGEQLQAALEATPAFQKWVQAIEIAGPGFLNIRLKPAAKQQVVREVLAQGAQYGYQPARGEKVLVEFVSANPTGPLHVGHGRQAAIGDAISHLYATQGWSVHREFYYNDAGVQIDTLTKSTQLRAKGFKPGDDCWPTDSENPLAKNFYNGDYIQDIADAFLAKATVQADDRAFTANGDVEDYENIRQFAVAYLRNEQDKDLQAFNLQFDQYYLESSLYANGHVDATVQRLVANGKTYEQDGALWLKSTDYGDDKDRVMRKQDGTYTYFVPDVAYHIQKFQRGFTKVVNIQGTDHHGTIARVRAGLQAADVGIPQGYPDYVLHTMVRVVRNGEEVKISKRAGSYVTLRDLIEWTSKDAVRFFLLSRKPDTEYTFDVDLAVAQNNDNPVYYVQYAHARICSVLRGWREDYDVAALRDVDLSPLEGPQAQALMLLLAKYPEMLTAAAAGNAPHDVTFYLRDLAAAYHSYYDAERILVDDEAVKQARLALVAATAQVLHNGLAVLGVSAPARM</sequence>
<comment type="catalytic activity">
    <reaction evidence="1">
        <text>tRNA(Arg) + L-arginine + ATP = L-arginyl-tRNA(Arg) + AMP + diphosphate</text>
        <dbReference type="Rhea" id="RHEA:20301"/>
        <dbReference type="Rhea" id="RHEA-COMP:9658"/>
        <dbReference type="Rhea" id="RHEA-COMP:9673"/>
        <dbReference type="ChEBI" id="CHEBI:30616"/>
        <dbReference type="ChEBI" id="CHEBI:32682"/>
        <dbReference type="ChEBI" id="CHEBI:33019"/>
        <dbReference type="ChEBI" id="CHEBI:78442"/>
        <dbReference type="ChEBI" id="CHEBI:78513"/>
        <dbReference type="ChEBI" id="CHEBI:456215"/>
        <dbReference type="EC" id="6.1.1.19"/>
    </reaction>
</comment>
<comment type="subunit">
    <text evidence="1">Monomer.</text>
</comment>
<comment type="subcellular location">
    <subcellularLocation>
        <location evidence="1">Cytoplasm</location>
    </subcellularLocation>
</comment>
<comment type="similarity">
    <text evidence="1">Belongs to the class-I aminoacyl-tRNA synthetase family.</text>
</comment>
<feature type="chain" id="PRO_1000198899" description="Arginine--tRNA ligase">
    <location>
        <begin position="1"/>
        <end position="567"/>
    </location>
</feature>
<feature type="short sequence motif" description="'HIGH' region">
    <location>
        <begin position="128"/>
        <end position="138"/>
    </location>
</feature>
<protein>
    <recommendedName>
        <fullName evidence="1">Arginine--tRNA ligase</fullName>
        <ecNumber evidence="1">6.1.1.19</ecNumber>
    </recommendedName>
    <alternativeName>
        <fullName evidence="1">Arginyl-tRNA synthetase</fullName>
        <shortName evidence="1">ArgRS</shortName>
    </alternativeName>
</protein>
<name>SYR_ACIET</name>
<reference key="1">
    <citation type="submission" date="2009-01" db="EMBL/GenBank/DDBJ databases">
        <title>Complete sequence of Diaphorobacter sp. TPSY.</title>
        <authorList>
            <consortium name="US DOE Joint Genome Institute"/>
            <person name="Lucas S."/>
            <person name="Copeland A."/>
            <person name="Lapidus A."/>
            <person name="Glavina del Rio T."/>
            <person name="Tice H."/>
            <person name="Bruce D."/>
            <person name="Goodwin L."/>
            <person name="Pitluck S."/>
            <person name="Chertkov O."/>
            <person name="Brettin T."/>
            <person name="Detter J.C."/>
            <person name="Han C."/>
            <person name="Larimer F."/>
            <person name="Land M."/>
            <person name="Hauser L."/>
            <person name="Kyrpides N."/>
            <person name="Mikhailova N."/>
            <person name="Coates J.D."/>
        </authorList>
    </citation>
    <scope>NUCLEOTIDE SEQUENCE [LARGE SCALE GENOMIC DNA]</scope>
    <source>
        <strain>TPSY</strain>
    </source>
</reference>